<dbReference type="EC" id="4.1.3.27"/>
<dbReference type="EMBL" id="AF139534">
    <property type="protein sequence ID" value="AAD33791.1"/>
    <property type="molecule type" value="Genomic_DNA"/>
</dbReference>
<dbReference type="RefSeq" id="WP_033014003.1">
    <property type="nucleotide sequence ID" value="NZ_CBCSGJ010000005.1"/>
</dbReference>
<dbReference type="SMR" id="Q9X6J4"/>
<dbReference type="GeneID" id="89611878"/>
<dbReference type="OrthoDB" id="9803598at2"/>
<dbReference type="UniPathway" id="UPA00035">
    <property type="reaction ID" value="UER00040"/>
</dbReference>
<dbReference type="GO" id="GO:0004049">
    <property type="term" value="F:anthranilate synthase activity"/>
    <property type="evidence" value="ECO:0007669"/>
    <property type="project" value="UniProtKB-EC"/>
</dbReference>
<dbReference type="GO" id="GO:0046872">
    <property type="term" value="F:metal ion binding"/>
    <property type="evidence" value="ECO:0007669"/>
    <property type="project" value="UniProtKB-KW"/>
</dbReference>
<dbReference type="GO" id="GO:0000162">
    <property type="term" value="P:L-tryptophan biosynthetic process"/>
    <property type="evidence" value="ECO:0007669"/>
    <property type="project" value="UniProtKB-UniPathway"/>
</dbReference>
<dbReference type="Gene3D" id="3.60.120.10">
    <property type="entry name" value="Anthranilate synthase"/>
    <property type="match status" value="1"/>
</dbReference>
<dbReference type="InterPro" id="IPR005801">
    <property type="entry name" value="ADC_synthase"/>
</dbReference>
<dbReference type="InterPro" id="IPR019999">
    <property type="entry name" value="Anth_synth_I-like"/>
</dbReference>
<dbReference type="InterPro" id="IPR006805">
    <property type="entry name" value="Anth_synth_I_N"/>
</dbReference>
<dbReference type="InterPro" id="IPR005256">
    <property type="entry name" value="Anth_synth_I_PabB"/>
</dbReference>
<dbReference type="InterPro" id="IPR015890">
    <property type="entry name" value="Chorismate_C"/>
</dbReference>
<dbReference type="NCBIfam" id="TIGR00564">
    <property type="entry name" value="trpE_most"/>
    <property type="match status" value="1"/>
</dbReference>
<dbReference type="PANTHER" id="PTHR11236">
    <property type="entry name" value="AMINOBENZOATE/ANTHRANILATE SYNTHASE"/>
    <property type="match status" value="1"/>
</dbReference>
<dbReference type="PANTHER" id="PTHR11236:SF48">
    <property type="entry name" value="ISOCHORISMATE SYNTHASE MENF"/>
    <property type="match status" value="1"/>
</dbReference>
<dbReference type="Pfam" id="PF04715">
    <property type="entry name" value="Anth_synt_I_N"/>
    <property type="match status" value="1"/>
</dbReference>
<dbReference type="Pfam" id="PF00425">
    <property type="entry name" value="Chorismate_bind"/>
    <property type="match status" value="1"/>
</dbReference>
<dbReference type="PRINTS" id="PR00095">
    <property type="entry name" value="ANTSNTHASEI"/>
</dbReference>
<dbReference type="SUPFAM" id="SSF56322">
    <property type="entry name" value="ADC synthase"/>
    <property type="match status" value="1"/>
</dbReference>
<protein>
    <recommendedName>
        <fullName>Anthranilate synthase component 1</fullName>
        <shortName>AS</shortName>
        <shortName>ASI</shortName>
        <ecNumber>4.1.3.27</ecNumber>
    </recommendedName>
</protein>
<sequence>MSIDRLAAFLADARQFRTIPIMRKFLADVIEPLQVFANLREEAVFLLESKDDESPWARYSFIGVAPFLTLESETGETFLIKDENGNVQMTASTLKEAFQAVERALCVKPLAEAAPFTGGAVGFLGYDFISAIEKVPRHRAPDLAMKAGHFVFCESLFAFDHEKRELSLIHYIRLKGHETMQEKIAIYRAAEERIAALAAKASRPRAEQPLLPAEDEAERAALFSKASSNYEKEQFLRDVEAVKQYIAAGDVFQAVLSQRFSVPVQAGGFAIYRILRHINPSPYMFYFRLDGIEIVGSSPEKLIQVRNRRAEIDPIAGTRRRGRSPAEDEKLADELYHDPKERAEHYMLVDLARNDIGRVAKYGTVEVPVLMEIGKFSHVMHLISKVVGVLDDDIHPIDALLAAFPAGTVSGAPKVRAMQILQELEPTARGLYAGAIAYIGFDGSIDSCIAIRTAVIKDGYAYVQAGAGIVADSVPELEWKETRNKASALIYAIEQAERLFAKGEQIVC</sequence>
<name>TRPE_GEOSE</name>
<proteinExistence type="inferred from homology"/>
<feature type="chain" id="PRO_0000154078" description="Anthranilate synthase component 1">
    <location>
        <begin position="1"/>
        <end position="508"/>
    </location>
</feature>
<feature type="binding site" evidence="2">
    <location>
        <position position="49"/>
    </location>
    <ligand>
        <name>L-tryptophan</name>
        <dbReference type="ChEBI" id="CHEBI:57912"/>
    </ligand>
</feature>
<feature type="binding site" evidence="2">
    <location>
        <begin position="282"/>
        <end position="284"/>
    </location>
    <ligand>
        <name>L-tryptophan</name>
        <dbReference type="ChEBI" id="CHEBI:57912"/>
    </ligand>
</feature>
<feature type="binding site" evidence="2">
    <location>
        <begin position="317"/>
        <end position="318"/>
    </location>
    <ligand>
        <name>chorismate</name>
        <dbReference type="ChEBI" id="CHEBI:29748"/>
    </ligand>
</feature>
<feature type="binding site" evidence="2">
    <location>
        <position position="344"/>
    </location>
    <ligand>
        <name>Mg(2+)</name>
        <dbReference type="ChEBI" id="CHEBI:18420"/>
    </ligand>
</feature>
<feature type="binding site" evidence="2">
    <location>
        <position position="432"/>
    </location>
    <ligand>
        <name>chorismate</name>
        <dbReference type="ChEBI" id="CHEBI:29748"/>
    </ligand>
</feature>
<feature type="binding site" evidence="2">
    <location>
        <position position="452"/>
    </location>
    <ligand>
        <name>chorismate</name>
        <dbReference type="ChEBI" id="CHEBI:29748"/>
    </ligand>
</feature>
<feature type="binding site" evidence="2">
    <location>
        <begin position="466"/>
        <end position="468"/>
    </location>
    <ligand>
        <name>chorismate</name>
        <dbReference type="ChEBI" id="CHEBI:29748"/>
    </ligand>
</feature>
<feature type="binding site" evidence="2">
    <location>
        <position position="468"/>
    </location>
    <ligand>
        <name>chorismate</name>
        <dbReference type="ChEBI" id="CHEBI:29748"/>
    </ligand>
</feature>
<feature type="binding site" evidence="2">
    <location>
        <position position="481"/>
    </location>
    <ligand>
        <name>Mg(2+)</name>
        <dbReference type="ChEBI" id="CHEBI:18420"/>
    </ligand>
</feature>
<organism>
    <name type="scientific">Geobacillus stearothermophilus</name>
    <name type="common">Bacillus stearothermophilus</name>
    <dbReference type="NCBI Taxonomy" id="1422"/>
    <lineage>
        <taxon>Bacteria</taxon>
        <taxon>Bacillati</taxon>
        <taxon>Bacillota</taxon>
        <taxon>Bacilli</taxon>
        <taxon>Bacillales</taxon>
        <taxon>Anoxybacillaceae</taxon>
        <taxon>Geobacillus</taxon>
    </lineage>
</organism>
<evidence type="ECO:0000250" key="1"/>
<evidence type="ECO:0000250" key="2">
    <source>
        <dbReference type="UniProtKB" id="P00897"/>
    </source>
</evidence>
<evidence type="ECO:0000305" key="3"/>
<reference key="1">
    <citation type="journal article" date="1999" name="J. Mol. Biol.">
        <title>Regulatory features of the trp operon and the crystal structure of the trp RNA-binding attenuation protein from Bacillus stearothermophilus.</title>
        <authorList>
            <person name="Chen X.-P."/>
            <person name="Antson A.A."/>
            <person name="Yang M."/>
            <person name="Baumann C."/>
            <person name="Dodson E.J."/>
            <person name="Dodson G.G."/>
            <person name="Gollnick P."/>
        </authorList>
    </citation>
    <scope>NUCLEOTIDE SEQUENCE [GENOMIC DNA]</scope>
    <source>
        <strain>ATCC 12980 / NCA 26</strain>
    </source>
</reference>
<accession>Q9X6J4</accession>
<keyword id="KW-0028">Amino-acid biosynthesis</keyword>
<keyword id="KW-0057">Aromatic amino acid biosynthesis</keyword>
<keyword id="KW-0456">Lyase</keyword>
<keyword id="KW-0460">Magnesium</keyword>
<keyword id="KW-0479">Metal-binding</keyword>
<keyword id="KW-0822">Tryptophan biosynthesis</keyword>
<gene>
    <name type="primary">trpE</name>
</gene>
<comment type="function">
    <text evidence="1">Part of a heterotetrameric complex that catalyzes the two-step biosynthesis of anthranilate, an intermediate in the biosynthesis of L-tryptophan. In the first step, the glutamine-binding beta subunit (TrpG) of anthranilate synthase (AS) provides the glutamine amidotransferase activity which generates ammonia as a substrate that, along with chorismate, is used in the second step, catalyzed by the large alpha subunit of AS (TrpE) to produce anthranilate. In the absence of TrpG, TrpE can synthesize anthranilate directly from chorismate and high concentrations of ammonia (By similarity).</text>
</comment>
<comment type="catalytic activity">
    <reaction>
        <text>chorismate + L-glutamine = anthranilate + pyruvate + L-glutamate + H(+)</text>
        <dbReference type="Rhea" id="RHEA:21732"/>
        <dbReference type="ChEBI" id="CHEBI:15361"/>
        <dbReference type="ChEBI" id="CHEBI:15378"/>
        <dbReference type="ChEBI" id="CHEBI:16567"/>
        <dbReference type="ChEBI" id="CHEBI:29748"/>
        <dbReference type="ChEBI" id="CHEBI:29985"/>
        <dbReference type="ChEBI" id="CHEBI:58359"/>
        <dbReference type="EC" id="4.1.3.27"/>
    </reaction>
</comment>
<comment type="cofactor">
    <cofactor evidence="2">
        <name>Mg(2+)</name>
        <dbReference type="ChEBI" id="CHEBI:18420"/>
    </cofactor>
    <text evidence="2">Binds 1 Mg(2+) ion per subunit.</text>
</comment>
<comment type="activity regulation">
    <text evidence="1">Feedback inhibited by tryptophan.</text>
</comment>
<comment type="pathway">
    <text>Amino-acid biosynthesis; L-tryptophan biosynthesis; L-tryptophan from chorismate: step 1/5.</text>
</comment>
<comment type="subunit">
    <text evidence="1">Heterotetramer consisting of two non-identical subunits: a beta subunit (TrpG) and a large alpha subunit (TrpE).</text>
</comment>
<comment type="similarity">
    <text evidence="3">Belongs to the anthranilate synthase component I family.</text>
</comment>